<comment type="function">
    <text evidence="2">Catalyzes the NAD-dependent conversion of D-erythrose 4-phosphate to 4-phosphoerythronate.</text>
</comment>
<comment type="catalytic activity">
    <reaction evidence="2">
        <text>D-erythrose 4-phosphate + NAD(+) + H2O = 4-phospho-D-erythronate + NADH + 2 H(+)</text>
        <dbReference type="Rhea" id="RHEA:12056"/>
        <dbReference type="ChEBI" id="CHEBI:15377"/>
        <dbReference type="ChEBI" id="CHEBI:15378"/>
        <dbReference type="ChEBI" id="CHEBI:16897"/>
        <dbReference type="ChEBI" id="CHEBI:57540"/>
        <dbReference type="ChEBI" id="CHEBI:57945"/>
        <dbReference type="ChEBI" id="CHEBI:58766"/>
        <dbReference type="EC" id="1.2.1.72"/>
    </reaction>
</comment>
<comment type="pathway">
    <text evidence="2">Cofactor biosynthesis; pyridoxine 5'-phosphate biosynthesis; pyridoxine 5'-phosphate from D-erythrose 4-phosphate: step 1/5.</text>
</comment>
<comment type="subunit">
    <text evidence="2">Homotetramer.</text>
</comment>
<comment type="subcellular location">
    <subcellularLocation>
        <location evidence="2">Cytoplasm</location>
    </subcellularLocation>
</comment>
<comment type="similarity">
    <text evidence="2">Belongs to the glyceraldehyde-3-phosphate dehydrogenase family. Epd subfamily.</text>
</comment>
<reference key="1">
    <citation type="journal article" date="2006" name="Mol. Microbiol.">
        <title>Role of pathogenicity island-associated integrases in the genome plasticity of uropathogenic Escherichia coli strain 536.</title>
        <authorList>
            <person name="Hochhut B."/>
            <person name="Wilde C."/>
            <person name="Balling G."/>
            <person name="Middendorf B."/>
            <person name="Dobrindt U."/>
            <person name="Brzuszkiewicz E."/>
            <person name="Gottschalk G."/>
            <person name="Carniel E."/>
            <person name="Hacker J."/>
        </authorList>
    </citation>
    <scope>NUCLEOTIDE SEQUENCE [LARGE SCALE GENOMIC DNA]</scope>
    <source>
        <strain>536 / UPEC</strain>
    </source>
</reference>
<gene>
    <name evidence="2" type="primary">epd</name>
    <name type="ordered locus">ECP_2916</name>
</gene>
<accession>Q0TDS9</accession>
<proteinExistence type="inferred from homology"/>
<sequence>MTVRVAINGFGRIGRNVVRALYESGRRAEITVVAINELADAAGMAHLLKYDTSHGRFAWEVRQERDQLFVGDDAIRVLHERSLQSLPWRELGVDVVLDCTGVYGSREHGEAHIAAGAKKVLFSHPGSNDLDATVVYGVNQDQLRAEHRIVSNASCTTNCIIPVIKLLDDAYGIESGTVTTIHSAMHDQQVIDAYHPDLRRTRAASQSIIPVDTKLAAGITRFFPQFNDRFEAIAVRVPTINVTAIDLSVTVKKPVKANEVNLLLQKAAQGAFHGIVDYTELPLVSVDFNHDPHSAIVDGTQTRVSGAHLIKTLVWCDNEWGFANRMLDTTLAMATVAFR</sequence>
<name>E4PD_ECOL5</name>
<protein>
    <recommendedName>
        <fullName evidence="2">D-erythrose-4-phosphate dehydrogenase</fullName>
        <shortName evidence="2">E4PDH</shortName>
        <ecNumber evidence="2">1.2.1.72</ecNumber>
    </recommendedName>
</protein>
<feature type="initiator methionine" description="Removed" evidence="1">
    <location>
        <position position="1"/>
    </location>
</feature>
<feature type="chain" id="PRO_0000293147" description="D-erythrose-4-phosphate dehydrogenase">
    <location>
        <begin position="2"/>
        <end position="339"/>
    </location>
</feature>
<feature type="active site" description="Nucleophile" evidence="2">
    <location>
        <position position="155"/>
    </location>
</feature>
<feature type="binding site" evidence="2">
    <location>
        <begin position="12"/>
        <end position="13"/>
    </location>
    <ligand>
        <name>NAD(+)</name>
        <dbReference type="ChEBI" id="CHEBI:57540"/>
    </ligand>
</feature>
<feature type="binding site" evidence="2">
    <location>
        <position position="81"/>
    </location>
    <ligand>
        <name>NAD(+)</name>
        <dbReference type="ChEBI" id="CHEBI:57540"/>
    </ligand>
</feature>
<feature type="binding site" evidence="2">
    <location>
        <begin position="154"/>
        <end position="156"/>
    </location>
    <ligand>
        <name>substrate</name>
    </ligand>
</feature>
<feature type="binding site" evidence="2">
    <location>
        <position position="200"/>
    </location>
    <ligand>
        <name>substrate</name>
    </ligand>
</feature>
<feature type="binding site" evidence="2">
    <location>
        <begin position="213"/>
        <end position="214"/>
    </location>
    <ligand>
        <name>substrate</name>
    </ligand>
</feature>
<feature type="binding site" evidence="2">
    <location>
        <position position="236"/>
    </location>
    <ligand>
        <name>substrate</name>
    </ligand>
</feature>
<feature type="binding site" evidence="2">
    <location>
        <position position="318"/>
    </location>
    <ligand>
        <name>NAD(+)</name>
        <dbReference type="ChEBI" id="CHEBI:57540"/>
    </ligand>
</feature>
<feature type="site" description="Activates thiol group during catalysis" evidence="2">
    <location>
        <position position="182"/>
    </location>
</feature>
<evidence type="ECO:0000250" key="1"/>
<evidence type="ECO:0000255" key="2">
    <source>
        <dbReference type="HAMAP-Rule" id="MF_01640"/>
    </source>
</evidence>
<dbReference type="EC" id="1.2.1.72" evidence="2"/>
<dbReference type="EMBL" id="CP000247">
    <property type="protein sequence ID" value="ABG70900.1"/>
    <property type="molecule type" value="Genomic_DNA"/>
</dbReference>
<dbReference type="RefSeq" id="WP_000218480.1">
    <property type="nucleotide sequence ID" value="NC_008253.1"/>
</dbReference>
<dbReference type="SMR" id="Q0TDS9"/>
<dbReference type="GeneID" id="93779071"/>
<dbReference type="KEGG" id="ecp:ECP_2916"/>
<dbReference type="HOGENOM" id="CLU_030140_0_2_6"/>
<dbReference type="UniPathway" id="UPA00244">
    <property type="reaction ID" value="UER00309"/>
</dbReference>
<dbReference type="Proteomes" id="UP000009182">
    <property type="component" value="Chromosome"/>
</dbReference>
<dbReference type="GO" id="GO:0005737">
    <property type="term" value="C:cytoplasm"/>
    <property type="evidence" value="ECO:0007669"/>
    <property type="project" value="UniProtKB-SubCell"/>
</dbReference>
<dbReference type="GO" id="GO:0048001">
    <property type="term" value="F:erythrose-4-phosphate dehydrogenase activity"/>
    <property type="evidence" value="ECO:0007669"/>
    <property type="project" value="UniProtKB-UniRule"/>
</dbReference>
<dbReference type="GO" id="GO:0051287">
    <property type="term" value="F:NAD binding"/>
    <property type="evidence" value="ECO:0007669"/>
    <property type="project" value="InterPro"/>
</dbReference>
<dbReference type="GO" id="GO:0042823">
    <property type="term" value="P:pyridoxal phosphate biosynthetic process"/>
    <property type="evidence" value="ECO:0007669"/>
    <property type="project" value="UniProtKB-UniRule"/>
</dbReference>
<dbReference type="GO" id="GO:0008615">
    <property type="term" value="P:pyridoxine biosynthetic process"/>
    <property type="evidence" value="ECO:0007669"/>
    <property type="project" value="UniProtKB-UniRule"/>
</dbReference>
<dbReference type="CDD" id="cd23937">
    <property type="entry name" value="GAPDH_C_E4PDH"/>
    <property type="match status" value="1"/>
</dbReference>
<dbReference type="CDD" id="cd17892">
    <property type="entry name" value="GAPDH_N_E4PDH"/>
    <property type="match status" value="1"/>
</dbReference>
<dbReference type="FunFam" id="3.30.360.10:FF:000007">
    <property type="entry name" value="D-erythrose-4-phosphate dehydrogenase"/>
    <property type="match status" value="1"/>
</dbReference>
<dbReference type="FunFam" id="3.40.50.720:FF:000001">
    <property type="entry name" value="Glyceraldehyde-3-phosphate dehydrogenase"/>
    <property type="match status" value="1"/>
</dbReference>
<dbReference type="Gene3D" id="3.30.360.10">
    <property type="entry name" value="Dihydrodipicolinate Reductase, domain 2"/>
    <property type="match status" value="1"/>
</dbReference>
<dbReference type="Gene3D" id="3.40.50.720">
    <property type="entry name" value="NAD(P)-binding Rossmann-like Domain"/>
    <property type="match status" value="1"/>
</dbReference>
<dbReference type="HAMAP" id="MF_01640">
    <property type="entry name" value="E4P_dehydrog"/>
    <property type="match status" value="1"/>
</dbReference>
<dbReference type="InterPro" id="IPR006422">
    <property type="entry name" value="E4P_DH_bac"/>
</dbReference>
<dbReference type="InterPro" id="IPR020831">
    <property type="entry name" value="GlycerAld/Erythrose_P_DH"/>
</dbReference>
<dbReference type="InterPro" id="IPR020830">
    <property type="entry name" value="GlycerAld_3-P_DH_AS"/>
</dbReference>
<dbReference type="InterPro" id="IPR020829">
    <property type="entry name" value="GlycerAld_3-P_DH_cat"/>
</dbReference>
<dbReference type="InterPro" id="IPR020828">
    <property type="entry name" value="GlycerAld_3-P_DH_NAD(P)-bd"/>
</dbReference>
<dbReference type="InterPro" id="IPR036291">
    <property type="entry name" value="NAD(P)-bd_dom_sf"/>
</dbReference>
<dbReference type="NCBIfam" id="TIGR01532">
    <property type="entry name" value="E4PD_g-proteo"/>
    <property type="match status" value="1"/>
</dbReference>
<dbReference type="NCBIfam" id="NF010058">
    <property type="entry name" value="PRK13535.1"/>
    <property type="match status" value="1"/>
</dbReference>
<dbReference type="PANTHER" id="PTHR43148">
    <property type="entry name" value="GLYCERALDEHYDE-3-PHOSPHATE DEHYDROGENASE 2"/>
    <property type="match status" value="1"/>
</dbReference>
<dbReference type="Pfam" id="PF02800">
    <property type="entry name" value="Gp_dh_C"/>
    <property type="match status" value="1"/>
</dbReference>
<dbReference type="Pfam" id="PF00044">
    <property type="entry name" value="Gp_dh_N"/>
    <property type="match status" value="1"/>
</dbReference>
<dbReference type="PIRSF" id="PIRSF000149">
    <property type="entry name" value="GAP_DH"/>
    <property type="match status" value="1"/>
</dbReference>
<dbReference type="PRINTS" id="PR00078">
    <property type="entry name" value="G3PDHDRGNASE"/>
</dbReference>
<dbReference type="SMART" id="SM00846">
    <property type="entry name" value="Gp_dh_N"/>
    <property type="match status" value="1"/>
</dbReference>
<dbReference type="SUPFAM" id="SSF55347">
    <property type="entry name" value="Glyceraldehyde-3-phosphate dehydrogenase-like, C-terminal domain"/>
    <property type="match status" value="1"/>
</dbReference>
<dbReference type="SUPFAM" id="SSF51735">
    <property type="entry name" value="NAD(P)-binding Rossmann-fold domains"/>
    <property type="match status" value="1"/>
</dbReference>
<dbReference type="PROSITE" id="PS00071">
    <property type="entry name" value="GAPDH"/>
    <property type="match status" value="1"/>
</dbReference>
<organism>
    <name type="scientific">Escherichia coli O6:K15:H31 (strain 536 / UPEC)</name>
    <dbReference type="NCBI Taxonomy" id="362663"/>
    <lineage>
        <taxon>Bacteria</taxon>
        <taxon>Pseudomonadati</taxon>
        <taxon>Pseudomonadota</taxon>
        <taxon>Gammaproteobacteria</taxon>
        <taxon>Enterobacterales</taxon>
        <taxon>Enterobacteriaceae</taxon>
        <taxon>Escherichia</taxon>
    </lineage>
</organism>
<keyword id="KW-0963">Cytoplasm</keyword>
<keyword id="KW-0520">NAD</keyword>
<keyword id="KW-0560">Oxidoreductase</keyword>
<keyword id="KW-0664">Pyridoxine biosynthesis</keyword>